<feature type="chain" id="PRO_0000285498" description="Transcription elongation factor A protein-like 1">
    <location>
        <begin position="1"/>
        <end position="159"/>
    </location>
</feature>
<feature type="region of interest" description="Disordered" evidence="3">
    <location>
        <begin position="1"/>
        <end position="121"/>
    </location>
</feature>
<feature type="compositionally biased region" description="Basic and acidic residues" evidence="3">
    <location>
        <begin position="17"/>
        <end position="34"/>
    </location>
</feature>
<feature type="compositionally biased region" description="Acidic residues" evidence="3">
    <location>
        <begin position="37"/>
        <end position="54"/>
    </location>
</feature>
<feature type="compositionally biased region" description="Basic and acidic residues" evidence="3">
    <location>
        <begin position="64"/>
        <end position="80"/>
    </location>
</feature>
<feature type="compositionally biased region" description="Basic and acidic residues" evidence="3">
    <location>
        <begin position="95"/>
        <end position="119"/>
    </location>
</feature>
<dbReference type="EMBL" id="DQ976479">
    <property type="protein sequence ID" value="ABM46687.1"/>
    <property type="molecule type" value="Genomic_DNA"/>
</dbReference>
<dbReference type="RefSeq" id="XP_004064646.1">
    <property type="nucleotide sequence ID" value="XM_004064598.5"/>
</dbReference>
<dbReference type="RefSeq" id="XP_004064647.1">
    <property type="nucleotide sequence ID" value="XM_004064599.3"/>
</dbReference>
<dbReference type="RefSeq" id="XP_018875292.1">
    <property type="nucleotide sequence ID" value="XM_019019747.3"/>
</dbReference>
<dbReference type="RefSeq" id="XP_018875293.1">
    <property type="nucleotide sequence ID" value="XM_019019748.2"/>
</dbReference>
<dbReference type="RefSeq" id="XP_063559002.1">
    <property type="nucleotide sequence ID" value="XM_063702932.1"/>
</dbReference>
<dbReference type="FunCoup" id="A1YEW9">
    <property type="interactions" value="860"/>
</dbReference>
<dbReference type="STRING" id="9593.ENSGGOP00000012041"/>
<dbReference type="Ensembl" id="ENSGGOT00000012386.3">
    <property type="protein sequence ID" value="ENSGGOP00000012041.3"/>
    <property type="gene ID" value="ENSGGOG00000012344.3"/>
</dbReference>
<dbReference type="GeneID" id="101132699"/>
<dbReference type="KEGG" id="ggo:101132699"/>
<dbReference type="CTD" id="9338"/>
<dbReference type="eggNOG" id="ENOG502TCYF">
    <property type="taxonomic scope" value="Eukaryota"/>
</dbReference>
<dbReference type="GeneTree" id="ENSGT00950000183164"/>
<dbReference type="HOGENOM" id="CLU_140430_0_0_1"/>
<dbReference type="InParanoid" id="A1YEW9"/>
<dbReference type="OMA" id="HWKAKRN"/>
<dbReference type="OrthoDB" id="16166at9604"/>
<dbReference type="Proteomes" id="UP000001519">
    <property type="component" value="Chromosome X"/>
</dbReference>
<dbReference type="Bgee" id="ENSGGOG00000012344">
    <property type="expression patterns" value="Expressed in prefrontal cortex and 5 other cell types or tissues"/>
</dbReference>
<dbReference type="GO" id="GO:0005654">
    <property type="term" value="C:nucleoplasm"/>
    <property type="evidence" value="ECO:0007669"/>
    <property type="project" value="Ensembl"/>
</dbReference>
<dbReference type="InterPro" id="IPR021156">
    <property type="entry name" value="TF_A-like/BEX"/>
</dbReference>
<dbReference type="Pfam" id="PF04538">
    <property type="entry name" value="BEX"/>
    <property type="match status" value="1"/>
</dbReference>
<name>TCAL1_GORGO</name>
<comment type="function">
    <text evidence="1">May be involved in transcriptional regulation. Modulates various viral and cellular promoters in a promoter context-dependent manner. Does not bind DNA directly (By similarity).</text>
</comment>
<comment type="subcellular location">
    <subcellularLocation>
        <location evidence="1">Nucleus</location>
    </subcellularLocation>
</comment>
<comment type="similarity">
    <text evidence="4">Belongs to the TFS-II family. TFA subfamily.</text>
</comment>
<proteinExistence type="inferred from homology"/>
<reference key="1">
    <citation type="submission" date="2006-08" db="EMBL/GenBank/DDBJ databases">
        <title>Positive selection in transcription factor genes on the human lineage.</title>
        <authorList>
            <person name="Nickel G.C."/>
            <person name="Tefft D.L."/>
            <person name="Trevarthen K."/>
            <person name="Funt J."/>
            <person name="Adams M.D."/>
        </authorList>
    </citation>
    <scope>NUCLEOTIDE SEQUENCE [GENOMIC DNA]</scope>
</reference>
<evidence type="ECO:0000250" key="1"/>
<evidence type="ECO:0000250" key="2">
    <source>
        <dbReference type="UniProtKB" id="Q15170"/>
    </source>
</evidence>
<evidence type="ECO:0000256" key="3">
    <source>
        <dbReference type="SAM" id="MobiDB-lite"/>
    </source>
</evidence>
<evidence type="ECO:0000305" key="4"/>
<protein>
    <recommendedName>
        <fullName evidence="2">Transcription elongation factor A protein-like 1</fullName>
        <shortName>TCEA-like protein 1</shortName>
    </recommendedName>
    <alternativeName>
        <fullName>Transcription elongation factor S-II protein-like 1</fullName>
    </alternativeName>
</protein>
<keyword id="KW-0539">Nucleus</keyword>
<keyword id="KW-1185">Reference proteome</keyword>
<keyword id="KW-0804">Transcription</keyword>
<keyword id="KW-0805">Transcription regulation</keyword>
<accession>A1YEW9</accession>
<gene>
    <name evidence="2" type="primary">TCEAL1</name>
</gene>
<organism>
    <name type="scientific">Gorilla gorilla gorilla</name>
    <name type="common">Western lowland gorilla</name>
    <dbReference type="NCBI Taxonomy" id="9595"/>
    <lineage>
        <taxon>Eukaryota</taxon>
        <taxon>Metazoa</taxon>
        <taxon>Chordata</taxon>
        <taxon>Craniata</taxon>
        <taxon>Vertebrata</taxon>
        <taxon>Euteleostomi</taxon>
        <taxon>Mammalia</taxon>
        <taxon>Eutheria</taxon>
        <taxon>Euarchontoglires</taxon>
        <taxon>Primates</taxon>
        <taxon>Haplorrhini</taxon>
        <taxon>Catarrhini</taxon>
        <taxon>Hominidae</taxon>
        <taxon>Gorilla</taxon>
    </lineage>
</organism>
<sequence>MDKPRKENEEEPQSAPKTDEERPPVEHSPEKQSPEEQSSEEQSSEEEFFPEELLPELLPEMLLSEERPPQEGLSRKDLFEGRPPMEQPPCGVGKHKLEEGSFKERLARSRPQFKGDIHGRNLSNEEMIQAADELEEMKRVRNKLMIMHWKAKRSRPYPI</sequence>